<comment type="function">
    <text evidence="2 3">Mediates transcriptional repression by certain nuclear receptors. Part of a complex which promotes histone deacetylation and the formation of repressive chromatin structures which may impede the access of basal transcription factors. Participates in the transcriptional repressor activity produced by BCL6. Recruited by ZBTB7A to the androgen response elements/ARE on target genes, negatively regulates androgen receptor signaling and androgen-induced cell proliferation (By similarity). Mediates the NR1D1-dependent repression and circadian regulation of TSHB expression (By similarity). The NCOR1-HDAC3 complex regulates the circadian expression of the core clock gene ARTNL/BMAL1 and the genes involved in lipid metabolism in the liver (By similarity).</text>
</comment>
<comment type="subunit">
    <text evidence="2 3">Forms a large corepressor complex that contains SIN3A/B and histone deacetylases HDAC1 and HDAC2. This complex associates with the thyroid receptor (TR) and the retinoid acid receptor (RAR) in the absence of ligand. Interacts directly with RARA; the interaction is facilitated with RARA trimethylation. Component of the N-Cor repressor complex, at least composed of CBFA2T3, HEXIM1, NCOR1, NCOR2, HDAC3, TBL1X, TBL1XR1, CORO2A and GPS2. Interacts with ZBTB33; the interaction serves to recruit the N-CoR complex to promoter regions containing methylated CpG dinucleotides. Interacts with TRIM28 and KDM3A. Interacts (via the RD1 domain) with BAZ1A (via its N-terminal); the interaction corepresses a number of NCOR1-regulated genes. Interacts with BCL6, C1D, DACH1, HEXIM1, HDAC7, RORA, RORC, SAP30, SIAH2, SIN3A and SIN3B. May interact with DEAF1. Interacts with RXRA. Interacts with SETD5. Interacts with VDR. Interacts with ZBTB7A (By similarity). Interacts with AR (By similarity). Interacts with HDAC3 (By similarity).</text>
</comment>
<comment type="subcellular location">
    <subcellularLocation>
        <location evidence="1">Nucleus</location>
    </subcellularLocation>
</comment>
<comment type="domain">
    <text evidence="1">The N-terminal region contains three independent domains that are capable of mediating transcriptional repression (RD1, RD2 and RD3).</text>
</comment>
<comment type="domain">
    <text evidence="1">The C-terminal region contains two separate nuclear receptor-interacting domains (ID1 and ID2), each of which contains a conserved sequence referred to as the CORNR box. This motif is necessary and sufficient for binding to unligated nuclear hormone receptors, while sequences flanking the CORNR box determine the precise nuclear hormone receptor specificity (By similarity).</text>
</comment>
<comment type="PTM">
    <text evidence="1">Ubiquitinated; mediated by SIAH2 and leading to its subsequent proteasomal degradation.</text>
</comment>
<comment type="similarity">
    <text evidence="5">Belongs to the N-CoR nuclear receptor corepressors family.</text>
</comment>
<gene>
    <name type="primary">Ncor1</name>
</gene>
<keyword id="KW-0090">Biological rhythms</keyword>
<keyword id="KW-0156">Chromatin regulator</keyword>
<keyword id="KW-0238">DNA-binding</keyword>
<keyword id="KW-0539">Nucleus</keyword>
<keyword id="KW-0597">Phosphoprotein</keyword>
<keyword id="KW-1185">Reference proteome</keyword>
<keyword id="KW-0678">Repressor</keyword>
<keyword id="KW-0804">Transcription</keyword>
<keyword id="KW-0805">Transcription regulation</keyword>
<keyword id="KW-0832">Ubl conjugation</keyword>
<accession>Q9WUB5</accession>
<accession>O70463</accession>
<sequence length="533" mass="57795">KDKGPPPKSRYEEELRTRGKTTITAANFIDVIITRQIASDKDARERGSQSSDSSSSLSSHRYEAPSDAIEVISPASSPAPPQEKPQTYQPEMVKANQAENESPQQYEGPLTHYRSQQGSPSPQQQPPLPPSSQAEGMGQVPRTHRLITLADHICQIITQDFARNQVPSQPSTSTFQTSPSALSSTPVRTKPSSRYSPESQSQTVLHPRPGPRVSPENLVDKSRGSRPGKSPERSHIPSEPYEPISPPQGPAVHEKQDSMLLLSQRGMDPAEQRSDSRSPGSISYLPYFFTKLESTSPMVKSKKQEIFRKLNSSGGGDSDMAAAQPGTEIFNLPAVTTSGAVSSRSHSFADPASNLGLEDIIRKALMGSFDDKVEDHGVVMPHPVGVVPGSASTSVVTSSETRRDEGDPSPHSGVCKPKLINKSNSRKSKSPIPGQNYLGTERPSSVSSVHSEGDYHRQTPGWAWEDRPSSTGSTQFPYNPLTIRMLSSTPPTPIACAPSAITQAAPHQQSRIWEREPAPLLSAQYETLSDSDD</sequence>
<proteinExistence type="evidence at protein level"/>
<dbReference type="EMBL" id="AF124821">
    <property type="protein sequence ID" value="AAD32566.1"/>
    <property type="molecule type" value="mRNA"/>
</dbReference>
<dbReference type="EMBL" id="AF059311">
    <property type="protein sequence ID" value="AAC14567.1"/>
    <property type="molecule type" value="mRNA"/>
</dbReference>
<dbReference type="STRING" id="10116.ENSRNOP00000072175"/>
<dbReference type="iPTMnet" id="Q9WUB5"/>
<dbReference type="PeptideAtlas" id="Q9WUB5"/>
<dbReference type="UCSC" id="RGD:3612">
    <property type="organism name" value="rat"/>
</dbReference>
<dbReference type="AGR" id="RGD:3612"/>
<dbReference type="RGD" id="3612">
    <property type="gene designation" value="Ncor1"/>
</dbReference>
<dbReference type="InParanoid" id="Q9WUB5"/>
<dbReference type="PhylomeDB" id="Q9WUB5"/>
<dbReference type="Proteomes" id="UP000002494">
    <property type="component" value="Unplaced"/>
</dbReference>
<dbReference type="GO" id="GO:0000785">
    <property type="term" value="C:chromatin"/>
    <property type="evidence" value="ECO:0000266"/>
    <property type="project" value="RGD"/>
</dbReference>
<dbReference type="GO" id="GO:0005737">
    <property type="term" value="C:cytoplasm"/>
    <property type="evidence" value="ECO:0000266"/>
    <property type="project" value="RGD"/>
</dbReference>
<dbReference type="GO" id="GO:0000118">
    <property type="term" value="C:histone deacetylase complex"/>
    <property type="evidence" value="ECO:0000266"/>
    <property type="project" value="RGD"/>
</dbReference>
<dbReference type="GO" id="GO:0072686">
    <property type="term" value="C:mitotic spindle"/>
    <property type="evidence" value="ECO:0000266"/>
    <property type="project" value="RGD"/>
</dbReference>
<dbReference type="GO" id="GO:0005634">
    <property type="term" value="C:nucleus"/>
    <property type="evidence" value="ECO:0000266"/>
    <property type="project" value="RGD"/>
</dbReference>
<dbReference type="GO" id="GO:0048471">
    <property type="term" value="C:perinuclear region of cytoplasm"/>
    <property type="evidence" value="ECO:0000314"/>
    <property type="project" value="RGD"/>
</dbReference>
<dbReference type="GO" id="GO:0005667">
    <property type="term" value="C:transcription regulator complex"/>
    <property type="evidence" value="ECO:0000266"/>
    <property type="project" value="RGD"/>
</dbReference>
<dbReference type="GO" id="GO:0017053">
    <property type="term" value="C:transcription repressor complex"/>
    <property type="evidence" value="ECO:0000266"/>
    <property type="project" value="RGD"/>
</dbReference>
<dbReference type="GO" id="GO:0003682">
    <property type="term" value="F:chromatin binding"/>
    <property type="evidence" value="ECO:0000314"/>
    <property type="project" value="RGD"/>
</dbReference>
<dbReference type="GO" id="GO:0003677">
    <property type="term" value="F:DNA binding"/>
    <property type="evidence" value="ECO:0000266"/>
    <property type="project" value="RGD"/>
</dbReference>
<dbReference type="GO" id="GO:0042826">
    <property type="term" value="F:histone deacetylase binding"/>
    <property type="evidence" value="ECO:0000353"/>
    <property type="project" value="RGD"/>
</dbReference>
<dbReference type="GO" id="GO:0035033">
    <property type="term" value="F:histone deacetylase regulator activity"/>
    <property type="evidence" value="ECO:0000266"/>
    <property type="project" value="RGD"/>
</dbReference>
<dbReference type="GO" id="GO:0030331">
    <property type="term" value="F:nuclear estrogen receptor binding"/>
    <property type="evidence" value="ECO:0000353"/>
    <property type="project" value="RGD"/>
</dbReference>
<dbReference type="GO" id="GO:0016922">
    <property type="term" value="F:nuclear receptor binding"/>
    <property type="evidence" value="ECO:0000266"/>
    <property type="project" value="RGD"/>
</dbReference>
<dbReference type="GO" id="GO:0042974">
    <property type="term" value="F:nuclear retinoic acid receptor binding"/>
    <property type="evidence" value="ECO:0000353"/>
    <property type="project" value="RGD"/>
</dbReference>
<dbReference type="GO" id="GO:0046965">
    <property type="term" value="F:nuclear retinoid X receptor binding"/>
    <property type="evidence" value="ECO:0000353"/>
    <property type="project" value="RGD"/>
</dbReference>
<dbReference type="GO" id="GO:0046966">
    <property type="term" value="F:nuclear thyroid hormone receptor binding"/>
    <property type="evidence" value="ECO:0000266"/>
    <property type="project" value="RGD"/>
</dbReference>
<dbReference type="GO" id="GO:0042975">
    <property type="term" value="F:peroxisome proliferator activated receptor binding"/>
    <property type="evidence" value="ECO:0000353"/>
    <property type="project" value="RGD"/>
</dbReference>
<dbReference type="GO" id="GO:0019904">
    <property type="term" value="F:protein domain specific binding"/>
    <property type="evidence" value="ECO:0000353"/>
    <property type="project" value="RGD"/>
</dbReference>
<dbReference type="GO" id="GO:0000977">
    <property type="term" value="F:RNA polymerase II transcription regulatory region sequence-specific DNA binding"/>
    <property type="evidence" value="ECO:0000314"/>
    <property type="project" value="RGD"/>
</dbReference>
<dbReference type="GO" id="GO:0061629">
    <property type="term" value="F:RNA polymerase II-specific DNA-binding transcription factor binding"/>
    <property type="evidence" value="ECO:0000266"/>
    <property type="project" value="RGD"/>
</dbReference>
<dbReference type="GO" id="GO:0043565">
    <property type="term" value="F:sequence-specific DNA binding"/>
    <property type="evidence" value="ECO:0000266"/>
    <property type="project" value="RGD"/>
</dbReference>
<dbReference type="GO" id="GO:0000976">
    <property type="term" value="F:transcription cis-regulatory region binding"/>
    <property type="evidence" value="ECO:0000266"/>
    <property type="project" value="RGD"/>
</dbReference>
<dbReference type="GO" id="GO:0003714">
    <property type="term" value="F:transcription corepressor activity"/>
    <property type="evidence" value="ECO:0000266"/>
    <property type="project" value="RGD"/>
</dbReference>
<dbReference type="GO" id="GO:0002361">
    <property type="term" value="P:CD4-positive, CD25-positive, alpha-beta regulatory T cell differentiation"/>
    <property type="evidence" value="ECO:0000266"/>
    <property type="project" value="RGD"/>
</dbReference>
<dbReference type="GO" id="GO:1904017">
    <property type="term" value="P:cellular response to Thyroglobulin triiodothyronine"/>
    <property type="evidence" value="ECO:0000266"/>
    <property type="project" value="RGD"/>
</dbReference>
<dbReference type="GO" id="GO:0021549">
    <property type="term" value="P:cerebellum development"/>
    <property type="evidence" value="ECO:0000270"/>
    <property type="project" value="RGD"/>
</dbReference>
<dbReference type="GO" id="GO:0042632">
    <property type="term" value="P:cholesterol homeostasis"/>
    <property type="evidence" value="ECO:0000266"/>
    <property type="project" value="RGD"/>
</dbReference>
<dbReference type="GO" id="GO:0006325">
    <property type="term" value="P:chromatin organization"/>
    <property type="evidence" value="ECO:0007669"/>
    <property type="project" value="UniProtKB-KW"/>
</dbReference>
<dbReference type="GO" id="GO:0032922">
    <property type="term" value="P:circadian regulation of gene expression"/>
    <property type="evidence" value="ECO:0000266"/>
    <property type="project" value="RGD"/>
</dbReference>
<dbReference type="GO" id="GO:0060318">
    <property type="term" value="P:definitive erythrocyte differentiation"/>
    <property type="evidence" value="ECO:0000266"/>
    <property type="project" value="RGD"/>
</dbReference>
<dbReference type="GO" id="GO:0008544">
    <property type="term" value="P:epidermis development"/>
    <property type="evidence" value="ECO:0000266"/>
    <property type="project" value="RGD"/>
</dbReference>
<dbReference type="GO" id="GO:0061436">
    <property type="term" value="P:establishment of skin barrier"/>
    <property type="evidence" value="ECO:0000266"/>
    <property type="project" value="RGD"/>
</dbReference>
<dbReference type="GO" id="GO:0010467">
    <property type="term" value="P:gene expression"/>
    <property type="evidence" value="ECO:0000266"/>
    <property type="project" value="RGD"/>
</dbReference>
<dbReference type="GO" id="GO:0001701">
    <property type="term" value="P:in utero embryonic development"/>
    <property type="evidence" value="ECO:0000266"/>
    <property type="project" value="RGD"/>
</dbReference>
<dbReference type="GO" id="GO:0007595">
    <property type="term" value="P:lactation"/>
    <property type="evidence" value="ECO:0000270"/>
    <property type="project" value="RGD"/>
</dbReference>
<dbReference type="GO" id="GO:0045475">
    <property type="term" value="P:locomotor rhythm"/>
    <property type="evidence" value="ECO:0000250"/>
    <property type="project" value="UniProtKB"/>
</dbReference>
<dbReference type="GO" id="GO:0060766">
    <property type="term" value="P:negative regulation of androgen receptor signaling pathway"/>
    <property type="evidence" value="ECO:0000266"/>
    <property type="project" value="RGD"/>
</dbReference>
<dbReference type="GO" id="GO:0045892">
    <property type="term" value="P:negative regulation of DNA-templated transcription"/>
    <property type="evidence" value="ECO:0000315"/>
    <property type="project" value="RGD"/>
</dbReference>
<dbReference type="GO" id="GO:0045922">
    <property type="term" value="P:negative regulation of fatty acid metabolic process"/>
    <property type="evidence" value="ECO:0000266"/>
    <property type="project" value="RGD"/>
</dbReference>
<dbReference type="GO" id="GO:0010629">
    <property type="term" value="P:negative regulation of gene expression"/>
    <property type="evidence" value="ECO:0000315"/>
    <property type="project" value="RGD"/>
</dbReference>
<dbReference type="GO" id="GO:0045820">
    <property type="term" value="P:negative regulation of glycolytic process"/>
    <property type="evidence" value="ECO:0000266"/>
    <property type="project" value="RGD"/>
</dbReference>
<dbReference type="GO" id="GO:0046329">
    <property type="term" value="P:negative regulation of JNK cascade"/>
    <property type="evidence" value="ECO:0000266"/>
    <property type="project" value="RGD"/>
</dbReference>
<dbReference type="GO" id="GO:1902894">
    <property type="term" value="P:negative regulation of miRNA transcription"/>
    <property type="evidence" value="ECO:0000266"/>
    <property type="project" value="RGD"/>
</dbReference>
<dbReference type="GO" id="GO:0051898">
    <property type="term" value="P:negative regulation of phosphatidylinositol 3-kinase/protein kinase B signal transduction"/>
    <property type="evidence" value="ECO:0000266"/>
    <property type="project" value="RGD"/>
</dbReference>
<dbReference type="GO" id="GO:0000122">
    <property type="term" value="P:negative regulation of transcription by RNA polymerase II"/>
    <property type="evidence" value="ECO:0000266"/>
    <property type="project" value="RGD"/>
</dbReference>
<dbReference type="GO" id="GO:0008284">
    <property type="term" value="P:positive regulation of cell population proliferation"/>
    <property type="evidence" value="ECO:0000315"/>
    <property type="project" value="RGD"/>
</dbReference>
<dbReference type="GO" id="GO:0050821">
    <property type="term" value="P:protein stabilization"/>
    <property type="evidence" value="ECO:0000266"/>
    <property type="project" value="RGD"/>
</dbReference>
<dbReference type="GO" id="GO:0040014">
    <property type="term" value="P:regulation of multicellular organism growth"/>
    <property type="evidence" value="ECO:0000266"/>
    <property type="project" value="RGD"/>
</dbReference>
<dbReference type="GO" id="GO:0002155">
    <property type="term" value="P:regulation of thyroid hormone receptor signaling pathway"/>
    <property type="evidence" value="ECO:0000266"/>
    <property type="project" value="RGD"/>
</dbReference>
<dbReference type="GO" id="GO:0006357">
    <property type="term" value="P:regulation of transcription by RNA polymerase II"/>
    <property type="evidence" value="ECO:0000266"/>
    <property type="project" value="RGD"/>
</dbReference>
<dbReference type="GO" id="GO:0007519">
    <property type="term" value="P:skeletal muscle tissue development"/>
    <property type="evidence" value="ECO:0000270"/>
    <property type="project" value="RGD"/>
</dbReference>
<dbReference type="GO" id="GO:0051225">
    <property type="term" value="P:spindle assembly"/>
    <property type="evidence" value="ECO:0000266"/>
    <property type="project" value="RGD"/>
</dbReference>
<dbReference type="GO" id="GO:0033077">
    <property type="term" value="P:T cell differentiation in thymus"/>
    <property type="evidence" value="ECO:0000266"/>
    <property type="project" value="RGD"/>
</dbReference>
<dbReference type="GO" id="GO:0021794">
    <property type="term" value="P:thalamus development"/>
    <property type="evidence" value="ECO:0000266"/>
    <property type="project" value="RGD"/>
</dbReference>
<dbReference type="InterPro" id="IPR051571">
    <property type="entry name" value="N-CoR_corepressor"/>
</dbReference>
<dbReference type="PANTHER" id="PTHR13992">
    <property type="entry name" value="NUCLEAR RECEPTOR CO-REPRESSOR RELATED NCOR"/>
    <property type="match status" value="1"/>
</dbReference>
<dbReference type="PANTHER" id="PTHR13992:SF5">
    <property type="entry name" value="NUCLEAR RECEPTOR COREPRESSOR 1"/>
    <property type="match status" value="1"/>
</dbReference>
<name>NCOR1_RAT</name>
<evidence type="ECO:0000250" key="1"/>
<evidence type="ECO:0000250" key="2">
    <source>
        <dbReference type="UniProtKB" id="O75376"/>
    </source>
</evidence>
<evidence type="ECO:0000250" key="3">
    <source>
        <dbReference type="UniProtKB" id="Q60974"/>
    </source>
</evidence>
<evidence type="ECO:0000256" key="4">
    <source>
        <dbReference type="SAM" id="MobiDB-lite"/>
    </source>
</evidence>
<evidence type="ECO:0000305" key="5"/>
<evidence type="ECO:0007744" key="6">
    <source>
    </source>
</evidence>
<protein>
    <recommendedName>
        <fullName>Nuclear receptor corepressor 1</fullName>
        <shortName>N-CoR</shortName>
        <shortName>N-CoR1</shortName>
    </recommendedName>
</protein>
<reference key="1">
    <citation type="journal article" date="1999" name="Hum. Mol. Genet.">
        <title>Aberrant interactions of transcriptional repressor proteins with the Huntington's disease gene product, huntingtin.</title>
        <authorList>
            <person name="Boutell J.M."/>
            <person name="Thomas P."/>
            <person name="Neal J.W."/>
            <person name="Weston V.J."/>
            <person name="Duce J."/>
            <person name="Harper P.S."/>
            <person name="Jones A.L."/>
        </authorList>
    </citation>
    <scope>NUCLEOTIDE SEQUENCE [MRNA]</scope>
    <source>
        <tissue>Brain</tissue>
    </source>
</reference>
<reference key="2">
    <citation type="journal article" date="1999" name="Eur. J. Biochem.">
        <title>Effects of contractile activity and hypothyroidism on nuclear hormone receptor mRNA isoforms in rat skeletal muscle.</title>
        <authorList>
            <person name="Schuler M.J."/>
            <person name="Buehler S."/>
            <person name="Pette D."/>
        </authorList>
    </citation>
    <scope>NUCLEOTIDE SEQUENCE [MRNA] OF 476-528</scope>
    <source>
        <tissue>Skeletal muscle</tissue>
    </source>
</reference>
<reference key="3">
    <citation type="journal article" date="2012" name="Nat. Commun.">
        <title>Quantitative maps of protein phosphorylation sites across 14 different rat organs and tissues.</title>
        <authorList>
            <person name="Lundby A."/>
            <person name="Secher A."/>
            <person name="Lage K."/>
            <person name="Nordsborg N.B."/>
            <person name="Dmytriyev A."/>
            <person name="Lundby C."/>
            <person name="Olsen J.V."/>
        </authorList>
    </citation>
    <scope>PHOSPHORYLATION [LARGE SCALE ANALYSIS] AT SER-73; SER-196; SER-214; SER-230; SER-245; SER-529 AND SER-531</scope>
    <scope>IDENTIFICATION BY MASS SPECTROMETRY [LARGE SCALE ANALYSIS]</scope>
</reference>
<organism>
    <name type="scientific">Rattus norvegicus</name>
    <name type="common">Rat</name>
    <dbReference type="NCBI Taxonomy" id="10116"/>
    <lineage>
        <taxon>Eukaryota</taxon>
        <taxon>Metazoa</taxon>
        <taxon>Chordata</taxon>
        <taxon>Craniata</taxon>
        <taxon>Vertebrata</taxon>
        <taxon>Euteleostomi</taxon>
        <taxon>Mammalia</taxon>
        <taxon>Eutheria</taxon>
        <taxon>Euarchontoglires</taxon>
        <taxon>Glires</taxon>
        <taxon>Rodentia</taxon>
        <taxon>Myomorpha</taxon>
        <taxon>Muroidea</taxon>
        <taxon>Muridae</taxon>
        <taxon>Murinae</taxon>
        <taxon>Rattus</taxon>
    </lineage>
</organism>
<feature type="chain" id="PRO_0000055619" description="Nuclear receptor corepressor 1">
    <location>
        <begin position="1" status="less than"/>
        <end position="533"/>
    </location>
</feature>
<feature type="region of interest" description="Disordered" evidence="4">
    <location>
        <begin position="1"/>
        <end position="21"/>
    </location>
</feature>
<feature type="region of interest" description="Disordered" evidence="4">
    <location>
        <begin position="37"/>
        <end position="144"/>
    </location>
</feature>
<feature type="region of interest" description="ID1" evidence="1">
    <location>
        <begin position="130"/>
        <end position="209"/>
    </location>
</feature>
<feature type="region of interest" description="Required for interaction with RARA in the absence of its ligand" evidence="1">
    <location>
        <begin position="145"/>
        <end position="148"/>
    </location>
</feature>
<feature type="region of interest" description="Disordered" evidence="4">
    <location>
        <begin position="165"/>
        <end position="254"/>
    </location>
</feature>
<feature type="region of interest" description="ID2" evidence="1">
    <location>
        <begin position="306"/>
        <end position="367"/>
    </location>
</feature>
<feature type="region of interest" description="Disordered" evidence="4">
    <location>
        <begin position="382"/>
        <end position="476"/>
    </location>
</feature>
<feature type="short sequence motif" description="CORNR box 1">
    <location>
        <begin position="29"/>
        <end position="33"/>
    </location>
</feature>
<feature type="short sequence motif" description="CORNR box 2">
    <location>
        <begin position="153"/>
        <end position="157"/>
    </location>
</feature>
<feature type="short sequence motif" description="CORNR box 3">
    <location>
        <begin position="357"/>
        <end position="361"/>
    </location>
</feature>
<feature type="compositionally biased region" description="Basic and acidic residues" evidence="4">
    <location>
        <begin position="1"/>
        <end position="17"/>
    </location>
</feature>
<feature type="compositionally biased region" description="Basic and acidic residues" evidence="4">
    <location>
        <begin position="38"/>
        <end position="47"/>
    </location>
</feature>
<feature type="compositionally biased region" description="Low complexity" evidence="4">
    <location>
        <begin position="48"/>
        <end position="59"/>
    </location>
</feature>
<feature type="compositionally biased region" description="Low complexity" evidence="4">
    <location>
        <begin position="165"/>
        <end position="180"/>
    </location>
</feature>
<feature type="compositionally biased region" description="Polar residues" evidence="4">
    <location>
        <begin position="181"/>
        <end position="204"/>
    </location>
</feature>
<feature type="compositionally biased region" description="Basic and acidic residues" evidence="4">
    <location>
        <begin position="218"/>
        <end position="236"/>
    </location>
</feature>
<feature type="compositionally biased region" description="Low complexity" evidence="4">
    <location>
        <begin position="382"/>
        <end position="399"/>
    </location>
</feature>
<feature type="modified residue" description="Phosphoserine" evidence="6">
    <location>
        <position position="73"/>
    </location>
</feature>
<feature type="modified residue" description="Phosphoserine" evidence="2">
    <location>
        <position position="77"/>
    </location>
</feature>
<feature type="modified residue" description="Phosphoserine" evidence="6">
    <location>
        <position position="196"/>
    </location>
</feature>
<feature type="modified residue" description="Phosphoserine" evidence="6">
    <location>
        <position position="214"/>
    </location>
</feature>
<feature type="modified residue" description="Phosphoserine" evidence="6">
    <location>
        <position position="230"/>
    </location>
</feature>
<feature type="modified residue" description="Phosphoserine" evidence="6">
    <location>
        <position position="245"/>
    </location>
</feature>
<feature type="modified residue" description="Phosphoserine" evidence="2">
    <location>
        <position position="278"/>
    </location>
</feature>
<feature type="modified residue" description="Phosphothreonine" evidence="2">
    <location>
        <position position="492"/>
    </location>
</feature>
<feature type="modified residue" description="Phosphoserine" evidence="6">
    <location>
        <position position="529"/>
    </location>
</feature>
<feature type="modified residue" description="Phosphoserine" evidence="6">
    <location>
        <position position="531"/>
    </location>
</feature>
<feature type="sequence conflict" description="In Ref. 2; AAC14567." evidence="5" ref="2">
    <original>R</original>
    <variation>W</variation>
    <location>
        <position position="484"/>
    </location>
</feature>
<feature type="sequence conflict" description="In Ref. 2; AAC14567." evidence="5" ref="2">
    <original>A</original>
    <variation>V</variation>
    <location>
        <position position="497"/>
    </location>
</feature>
<feature type="non-terminal residue">
    <location>
        <position position="1"/>
    </location>
</feature>